<comment type="function">
    <text evidence="1">Essential cell division protein that coordinates cell division and chromosome segregation. The N-terminus is involved in assembly of the cell-division machinery. The C-terminus functions as a DNA motor that moves dsDNA in an ATP-dependent manner towards the dif recombination site, which is located within the replication terminus region. Required for activation of the Xer recombinase, allowing activation of chromosome unlinking by recombination (By similarity).</text>
</comment>
<comment type="subunit">
    <text evidence="1">Homohexamer. Forms a ring that surrounds DNA (By similarity).</text>
</comment>
<comment type="subcellular location">
    <subcellularLocation>
        <location evidence="1">Cell membrane</location>
        <topology evidence="1">Multi-pass membrane protein</topology>
    </subcellularLocation>
    <text evidence="1">Located at the septum.</text>
</comment>
<comment type="domain">
    <text evidence="1">Consists of an N-terminal domain, which is sufficient for the localization to the septal ring and is required for cell division, followed by a linker domain, and a C-terminal domain, which forms the translocation motor involved in chromosome segregation. The C-terminal domain can be further subdivided into alpha, beta and gamma subdomains. The alpha and beta subdomains form the DNA pump, and the gamma subdomain is a regulatory subdomain (By similarity).</text>
</comment>
<comment type="similarity">
    <text evidence="5">Belongs to the FtsK/SpoIIIE/SftA family.</text>
</comment>
<gene>
    <name type="primary">ftsK</name>
    <name type="ordered locus">TW631</name>
</gene>
<protein>
    <recommendedName>
        <fullName>DNA translocase FtsK</fullName>
    </recommendedName>
</protein>
<dbReference type="EMBL" id="BX251412">
    <property type="protein sequence ID" value="CAD67295.1"/>
    <property type="molecule type" value="Genomic_DNA"/>
</dbReference>
<dbReference type="RefSeq" id="WP_011096573.1">
    <property type="nucleotide sequence ID" value="NC_004551.1"/>
</dbReference>
<dbReference type="SMR" id="Q83MI4"/>
<dbReference type="GeneID" id="67388410"/>
<dbReference type="KEGG" id="tws:TW631"/>
<dbReference type="HOGENOM" id="CLU_001981_2_3_11"/>
<dbReference type="GO" id="GO:0005886">
    <property type="term" value="C:plasma membrane"/>
    <property type="evidence" value="ECO:0007669"/>
    <property type="project" value="UniProtKB-SubCell"/>
</dbReference>
<dbReference type="GO" id="GO:0005524">
    <property type="term" value="F:ATP binding"/>
    <property type="evidence" value="ECO:0007669"/>
    <property type="project" value="UniProtKB-KW"/>
</dbReference>
<dbReference type="GO" id="GO:0016887">
    <property type="term" value="F:ATP hydrolysis activity"/>
    <property type="evidence" value="ECO:0007669"/>
    <property type="project" value="InterPro"/>
</dbReference>
<dbReference type="GO" id="GO:0003677">
    <property type="term" value="F:DNA binding"/>
    <property type="evidence" value="ECO:0007669"/>
    <property type="project" value="UniProtKB-KW"/>
</dbReference>
<dbReference type="GO" id="GO:0051301">
    <property type="term" value="P:cell division"/>
    <property type="evidence" value="ECO:0007669"/>
    <property type="project" value="UniProtKB-KW"/>
</dbReference>
<dbReference type="GO" id="GO:0007059">
    <property type="term" value="P:chromosome segregation"/>
    <property type="evidence" value="ECO:0007669"/>
    <property type="project" value="UniProtKB-KW"/>
</dbReference>
<dbReference type="CDD" id="cd01127">
    <property type="entry name" value="TrwB_TraG_TraD_VirD4"/>
    <property type="match status" value="1"/>
</dbReference>
<dbReference type="Gene3D" id="3.30.980.40">
    <property type="match status" value="1"/>
</dbReference>
<dbReference type="Gene3D" id="3.40.50.300">
    <property type="entry name" value="P-loop containing nucleotide triphosphate hydrolases"/>
    <property type="match status" value="1"/>
</dbReference>
<dbReference type="Gene3D" id="1.10.10.10">
    <property type="entry name" value="Winged helix-like DNA-binding domain superfamily/Winged helix DNA-binding domain"/>
    <property type="match status" value="1"/>
</dbReference>
<dbReference type="InterPro" id="IPR003593">
    <property type="entry name" value="AAA+_ATPase"/>
</dbReference>
<dbReference type="InterPro" id="IPR050206">
    <property type="entry name" value="FtsK/SpoIIIE/SftA"/>
</dbReference>
<dbReference type="InterPro" id="IPR041027">
    <property type="entry name" value="FtsK_alpha"/>
</dbReference>
<dbReference type="InterPro" id="IPR002543">
    <property type="entry name" value="FtsK_dom"/>
</dbReference>
<dbReference type="InterPro" id="IPR018541">
    <property type="entry name" value="Ftsk_gamma"/>
</dbReference>
<dbReference type="InterPro" id="IPR027417">
    <property type="entry name" value="P-loop_NTPase"/>
</dbReference>
<dbReference type="InterPro" id="IPR036388">
    <property type="entry name" value="WH-like_DNA-bd_sf"/>
</dbReference>
<dbReference type="InterPro" id="IPR036390">
    <property type="entry name" value="WH_DNA-bd_sf"/>
</dbReference>
<dbReference type="PANTHER" id="PTHR22683:SF41">
    <property type="entry name" value="DNA TRANSLOCASE FTSK"/>
    <property type="match status" value="1"/>
</dbReference>
<dbReference type="PANTHER" id="PTHR22683">
    <property type="entry name" value="SPORULATION PROTEIN RELATED"/>
    <property type="match status" value="1"/>
</dbReference>
<dbReference type="Pfam" id="PF17854">
    <property type="entry name" value="FtsK_alpha"/>
    <property type="match status" value="1"/>
</dbReference>
<dbReference type="Pfam" id="PF09397">
    <property type="entry name" value="FtsK_gamma"/>
    <property type="match status" value="1"/>
</dbReference>
<dbReference type="Pfam" id="PF01580">
    <property type="entry name" value="FtsK_SpoIIIE"/>
    <property type="match status" value="1"/>
</dbReference>
<dbReference type="SMART" id="SM00382">
    <property type="entry name" value="AAA"/>
    <property type="match status" value="1"/>
</dbReference>
<dbReference type="SMART" id="SM00843">
    <property type="entry name" value="Ftsk_gamma"/>
    <property type="match status" value="1"/>
</dbReference>
<dbReference type="SUPFAM" id="SSF52540">
    <property type="entry name" value="P-loop containing nucleoside triphosphate hydrolases"/>
    <property type="match status" value="1"/>
</dbReference>
<dbReference type="SUPFAM" id="SSF46785">
    <property type="entry name" value="Winged helix' DNA-binding domain"/>
    <property type="match status" value="1"/>
</dbReference>
<dbReference type="PROSITE" id="PS50901">
    <property type="entry name" value="FTSK"/>
    <property type="match status" value="1"/>
</dbReference>
<reference key="1">
    <citation type="journal article" date="2003" name="Lancet">
        <title>Sequencing and analysis of the genome of the Whipple's disease bacterium Tropheryma whipplei.</title>
        <authorList>
            <person name="Bentley S.D."/>
            <person name="Maiwald M."/>
            <person name="Murphy L.D."/>
            <person name="Pallen M.J."/>
            <person name="Yeats C.A."/>
            <person name="Dover L.G."/>
            <person name="Norbertczak H.T."/>
            <person name="Besra G.S."/>
            <person name="Quail M.A."/>
            <person name="Harris D.E."/>
            <person name="von Herbay A."/>
            <person name="Goble A."/>
            <person name="Rutter S."/>
            <person name="Squares R."/>
            <person name="Squares S."/>
            <person name="Barrell B.G."/>
            <person name="Parkhill J."/>
            <person name="Relman D.A."/>
        </authorList>
    </citation>
    <scope>NUCLEOTIDE SEQUENCE [LARGE SCALE GENOMIC DNA]</scope>
    <source>
        <strain>TW08/27</strain>
    </source>
</reference>
<proteinExistence type="inferred from homology"/>
<evidence type="ECO:0000250" key="1"/>
<evidence type="ECO:0000255" key="2"/>
<evidence type="ECO:0000255" key="3">
    <source>
        <dbReference type="PROSITE-ProRule" id="PRU00289"/>
    </source>
</evidence>
<evidence type="ECO:0000256" key="4">
    <source>
        <dbReference type="SAM" id="MobiDB-lite"/>
    </source>
</evidence>
<evidence type="ECO:0000305" key="5"/>
<organism>
    <name type="scientific">Tropheryma whipplei (strain TW08/27)</name>
    <name type="common">Whipple's bacillus</name>
    <dbReference type="NCBI Taxonomy" id="218496"/>
    <lineage>
        <taxon>Bacteria</taxon>
        <taxon>Bacillati</taxon>
        <taxon>Actinomycetota</taxon>
        <taxon>Actinomycetes</taxon>
        <taxon>Micrococcales</taxon>
        <taxon>Tropherymataceae</taxon>
        <taxon>Tropheryma</taxon>
    </lineage>
</organism>
<accession>Q83MI4</accession>
<keyword id="KW-0067">ATP-binding</keyword>
<keyword id="KW-0131">Cell cycle</keyword>
<keyword id="KW-0132">Cell division</keyword>
<keyword id="KW-1003">Cell membrane</keyword>
<keyword id="KW-0159">Chromosome partition</keyword>
<keyword id="KW-0238">DNA-binding</keyword>
<keyword id="KW-0472">Membrane</keyword>
<keyword id="KW-0547">Nucleotide-binding</keyword>
<keyword id="KW-0812">Transmembrane</keyword>
<keyword id="KW-1133">Transmembrane helix</keyword>
<sequence length="741" mass="80531">MSAKKSYLKVWRGLAGAAGSCARVFSKKSLARRDRRDQLPFALFLFGLVGAVFQWFLYGNWLSGIVSEYTVAAFFGGFSIVLPILLIGFSIWLFRNPQKTHDNIRVSIGLFMFSSFSAAFLHFSAGFPYPSSGIRILSTAGGIIGWLVGLPLTTLPSYLAKTVCIIFIVLSVSVISKTPISKIVRVIFRYAKWLFNSDSVKTSPNSSVSSSSEHQELTGRDMPDTAGDNRHDETVTVLSGTSLTGSPVSEYRGESSDYALPSLDILNSYPPVKHDDAENEKVITALSGVLRQFSVNARFSGFSRGPTVTQYELELGEGVKVERIIALTKNISYAVASDKVSILSPIPGKSAIGIEIPNKKRELVALGSVLQSIHPDAHPMTVGLGKDSSGGFVLTNLTTMPHLLVAGATGSGKSSFVNSMITSILLRAHPSQVRLVLIDPKRVELAIYSGVPHLITPIVTDPKKASEVLQWVVKEMERRYDDLASFGFRHIDDFNLAVRAKKIASDSRELTPYPYLLVIVDELADLMLVAAKDVEESIVRITQLARASGIHIVLATQRPSVNVVTGLIKANVPSRLAFAVSSLVDSRVILDRPGAEKLVGQGDGLFLPISAGKPIRIQSSWVTENEILRVVEYVKSQAHPDYYVLEVQNQGNIDSHIGDDMPLLLKATELVINSQLGSTSMLQRKLRVGFAKAGRLMDLMESMGIVGPGQGSKAREVLVTPQDLDSTLARISASVSDSKLD</sequence>
<name>FTSK_TROW8</name>
<feature type="chain" id="PRO_0000098314" description="DNA translocase FtsK">
    <location>
        <begin position="1"/>
        <end position="741"/>
    </location>
</feature>
<feature type="transmembrane region" description="Helical" evidence="2">
    <location>
        <begin position="39"/>
        <end position="59"/>
    </location>
</feature>
<feature type="transmembrane region" description="Helical" evidence="2">
    <location>
        <begin position="74"/>
        <end position="94"/>
    </location>
</feature>
<feature type="transmembrane region" description="Helical" evidence="2">
    <location>
        <begin position="108"/>
        <end position="128"/>
    </location>
</feature>
<feature type="transmembrane region" description="Helical" evidence="2">
    <location>
        <begin position="136"/>
        <end position="156"/>
    </location>
</feature>
<feature type="transmembrane region" description="Helical" evidence="2">
    <location>
        <begin position="163"/>
        <end position="183"/>
    </location>
</feature>
<feature type="topological domain" description="Cytoplasmic" evidence="2">
    <location>
        <begin position="184"/>
        <end position="741"/>
    </location>
</feature>
<feature type="domain" description="FtsK" evidence="3">
    <location>
        <begin position="390"/>
        <end position="587"/>
    </location>
</feature>
<feature type="region of interest" description="Disordered" evidence="4">
    <location>
        <begin position="200"/>
        <end position="232"/>
    </location>
</feature>
<feature type="compositionally biased region" description="Low complexity" evidence="4">
    <location>
        <begin position="200"/>
        <end position="212"/>
    </location>
</feature>
<feature type="compositionally biased region" description="Basic and acidic residues" evidence="4">
    <location>
        <begin position="213"/>
        <end position="232"/>
    </location>
</feature>
<feature type="binding site" evidence="3">
    <location>
        <begin position="410"/>
        <end position="415"/>
    </location>
    <ligand>
        <name>ATP</name>
        <dbReference type="ChEBI" id="CHEBI:30616"/>
    </ligand>
</feature>